<comment type="function">
    <text evidence="1">One of the primary rRNA binding proteins, it binds directly to 16S rRNA where it nucleates assembly of the body of the 30S subunit.</text>
</comment>
<comment type="function">
    <text evidence="1">With S5 and S12 plays an important role in translational accuracy.</text>
</comment>
<comment type="subunit">
    <text evidence="1">Part of the 30S ribosomal subunit. Contacts protein S5. The interaction surface between S4 and S5 is involved in control of translational fidelity.</text>
</comment>
<comment type="similarity">
    <text evidence="1">Belongs to the universal ribosomal protein uS4 family.</text>
</comment>
<evidence type="ECO:0000255" key="1">
    <source>
        <dbReference type="HAMAP-Rule" id="MF_01306"/>
    </source>
</evidence>
<evidence type="ECO:0000305" key="2"/>
<sequence length="170" mass="19323">MALPGENTKFYETPNHPYQGERIAEESDLLSRYGLKNKEELWRAQSELRDYRREARRLLGQTGTVSGEEFVARLQRIGILSEEERLDDVLSLEVTDVLERRLQTVVYREGLANTMGQARQFVSHGHVTVDGSRVTEPSYTVPVSEENTLAFDETSDLTDELHPARAGAQE</sequence>
<name>RS4_HALS3</name>
<reference key="1">
    <citation type="journal article" date="2008" name="Genomics">
        <title>Evolution in the laboratory: the genome of Halobacterium salinarum strain R1 compared to that of strain NRC-1.</title>
        <authorList>
            <person name="Pfeiffer F."/>
            <person name="Schuster S.C."/>
            <person name="Broicher A."/>
            <person name="Falb M."/>
            <person name="Palm P."/>
            <person name="Rodewald K."/>
            <person name="Ruepp A."/>
            <person name="Soppa J."/>
            <person name="Tittor J."/>
            <person name="Oesterhelt D."/>
        </authorList>
    </citation>
    <scope>NUCLEOTIDE SEQUENCE [LARGE SCALE GENOMIC DNA]</scope>
    <source>
        <strain>ATCC 29341 / DSM 671 / R1</strain>
    </source>
</reference>
<gene>
    <name evidence="1" type="primary">rps4</name>
    <name type="ordered locus">OE_2628F</name>
</gene>
<keyword id="KW-0687">Ribonucleoprotein</keyword>
<keyword id="KW-0689">Ribosomal protein</keyword>
<keyword id="KW-0694">RNA-binding</keyword>
<keyword id="KW-0699">rRNA-binding</keyword>
<dbReference type="EMBL" id="AM774415">
    <property type="protein sequence ID" value="CAP13795.1"/>
    <property type="molecule type" value="Genomic_DNA"/>
</dbReference>
<dbReference type="RefSeq" id="WP_010902813.1">
    <property type="nucleotide sequence ID" value="NC_010364.1"/>
</dbReference>
<dbReference type="SMR" id="B0R4Y0"/>
<dbReference type="EnsemblBacteria" id="CAP13795">
    <property type="protein sequence ID" value="CAP13795"/>
    <property type="gene ID" value="OE_2628F"/>
</dbReference>
<dbReference type="KEGG" id="hsl:OE_2628F"/>
<dbReference type="HOGENOM" id="CLU_089738_1_1_2"/>
<dbReference type="PhylomeDB" id="B0R4Y0"/>
<dbReference type="Proteomes" id="UP000001321">
    <property type="component" value="Chromosome"/>
</dbReference>
<dbReference type="GO" id="GO:0015935">
    <property type="term" value="C:small ribosomal subunit"/>
    <property type="evidence" value="ECO:0007669"/>
    <property type="project" value="InterPro"/>
</dbReference>
<dbReference type="GO" id="GO:0019843">
    <property type="term" value="F:rRNA binding"/>
    <property type="evidence" value="ECO:0007669"/>
    <property type="project" value="UniProtKB-UniRule"/>
</dbReference>
<dbReference type="GO" id="GO:0003735">
    <property type="term" value="F:structural constituent of ribosome"/>
    <property type="evidence" value="ECO:0007669"/>
    <property type="project" value="InterPro"/>
</dbReference>
<dbReference type="GO" id="GO:0042274">
    <property type="term" value="P:ribosomal small subunit biogenesis"/>
    <property type="evidence" value="ECO:0007669"/>
    <property type="project" value="TreeGrafter"/>
</dbReference>
<dbReference type="GO" id="GO:0006412">
    <property type="term" value="P:translation"/>
    <property type="evidence" value="ECO:0007669"/>
    <property type="project" value="UniProtKB-UniRule"/>
</dbReference>
<dbReference type="CDD" id="cd00165">
    <property type="entry name" value="S4"/>
    <property type="match status" value="1"/>
</dbReference>
<dbReference type="Gene3D" id="1.10.1050.10">
    <property type="entry name" value="Ribosomal Protein S4 Delta 41, Chain A, domain 1"/>
    <property type="match status" value="1"/>
</dbReference>
<dbReference type="Gene3D" id="3.10.290.10">
    <property type="entry name" value="RNA-binding S4 domain"/>
    <property type="match status" value="1"/>
</dbReference>
<dbReference type="HAMAP" id="MF_01306_A">
    <property type="entry name" value="Ribosomal_uS4_A"/>
    <property type="match status" value="1"/>
</dbReference>
<dbReference type="InterPro" id="IPR022801">
    <property type="entry name" value="Ribosomal_uS4"/>
</dbReference>
<dbReference type="InterPro" id="IPR022802">
    <property type="entry name" value="Ribosomal_uS4_arc"/>
</dbReference>
<dbReference type="InterPro" id="IPR018079">
    <property type="entry name" value="Ribosomal_uS4_CS"/>
</dbReference>
<dbReference type="InterPro" id="IPR005710">
    <property type="entry name" value="Ribosomal_uS4_euk/arc"/>
</dbReference>
<dbReference type="InterPro" id="IPR001912">
    <property type="entry name" value="Ribosomal_uS4_N"/>
</dbReference>
<dbReference type="InterPro" id="IPR002942">
    <property type="entry name" value="S4_RNA-bd"/>
</dbReference>
<dbReference type="InterPro" id="IPR036986">
    <property type="entry name" value="S4_RNA-bd_sf"/>
</dbReference>
<dbReference type="NCBIfam" id="NF003139">
    <property type="entry name" value="PRK04051.1"/>
    <property type="match status" value="1"/>
</dbReference>
<dbReference type="NCBIfam" id="TIGR01018">
    <property type="entry name" value="uS4_arch"/>
    <property type="match status" value="1"/>
</dbReference>
<dbReference type="PANTHER" id="PTHR11831">
    <property type="entry name" value="30S 40S RIBOSOMAL PROTEIN"/>
    <property type="match status" value="1"/>
</dbReference>
<dbReference type="PANTHER" id="PTHR11831:SF5">
    <property type="entry name" value="40S RIBOSOMAL PROTEIN S9"/>
    <property type="match status" value="1"/>
</dbReference>
<dbReference type="Pfam" id="PF01479">
    <property type="entry name" value="S4"/>
    <property type="match status" value="1"/>
</dbReference>
<dbReference type="SMART" id="SM01390">
    <property type="entry name" value="Ribosomal_S4"/>
    <property type="match status" value="1"/>
</dbReference>
<dbReference type="SMART" id="SM00363">
    <property type="entry name" value="S4"/>
    <property type="match status" value="1"/>
</dbReference>
<dbReference type="SUPFAM" id="SSF55174">
    <property type="entry name" value="Alpha-L RNA-binding motif"/>
    <property type="match status" value="1"/>
</dbReference>
<dbReference type="PROSITE" id="PS00632">
    <property type="entry name" value="RIBOSOMAL_S4"/>
    <property type="match status" value="1"/>
</dbReference>
<dbReference type="PROSITE" id="PS50889">
    <property type="entry name" value="S4"/>
    <property type="match status" value="1"/>
</dbReference>
<accession>B0R4Y0</accession>
<proteinExistence type="inferred from homology"/>
<feature type="chain" id="PRO_1000140740" description="Small ribosomal subunit protein uS4">
    <location>
        <begin position="1"/>
        <end position="170"/>
    </location>
</feature>
<feature type="domain" description="S4 RNA-binding" evidence="1">
    <location>
        <begin position="100"/>
        <end position="164"/>
    </location>
</feature>
<protein>
    <recommendedName>
        <fullName evidence="1">Small ribosomal subunit protein uS4</fullName>
    </recommendedName>
    <alternativeName>
        <fullName evidence="2">30S ribosomal protein S4</fullName>
    </alternativeName>
</protein>
<organism>
    <name type="scientific">Halobacterium salinarum (strain ATCC 29341 / DSM 671 / R1)</name>
    <dbReference type="NCBI Taxonomy" id="478009"/>
    <lineage>
        <taxon>Archaea</taxon>
        <taxon>Methanobacteriati</taxon>
        <taxon>Methanobacteriota</taxon>
        <taxon>Stenosarchaea group</taxon>
        <taxon>Halobacteria</taxon>
        <taxon>Halobacteriales</taxon>
        <taxon>Halobacteriaceae</taxon>
        <taxon>Halobacterium</taxon>
        <taxon>Halobacterium salinarum NRC-34001</taxon>
    </lineage>
</organism>